<accession>P46452</accession>
<protein>
    <recommendedName>
        <fullName>D-glycero-beta-D-manno-heptose-1,7-bisphosphate 7-phosphatase</fullName>
        <ecNumber evidence="3">3.1.3.82</ecNumber>
    </recommendedName>
    <alternativeName>
        <fullName>D,D-heptose 1,7-bisphosphate phosphatase</fullName>
        <shortName>HBP phosphatase</shortName>
    </alternativeName>
</protein>
<reference key="1">
    <citation type="journal article" date="1995" name="Science">
        <title>Whole-genome random sequencing and assembly of Haemophilus influenzae Rd.</title>
        <authorList>
            <person name="Fleischmann R.D."/>
            <person name="Adams M.D."/>
            <person name="White O."/>
            <person name="Clayton R.A."/>
            <person name="Kirkness E.F."/>
            <person name="Kerlavage A.R."/>
            <person name="Bult C.J."/>
            <person name="Tomb J.-F."/>
            <person name="Dougherty B.A."/>
            <person name="Merrick J.M."/>
            <person name="McKenney K."/>
            <person name="Sutton G.G."/>
            <person name="FitzHugh W."/>
            <person name="Fields C.A."/>
            <person name="Gocayne J.D."/>
            <person name="Scott J.D."/>
            <person name="Shirley R."/>
            <person name="Liu L.-I."/>
            <person name="Glodek A."/>
            <person name="Kelley J.M."/>
            <person name="Weidman J.F."/>
            <person name="Phillips C.A."/>
            <person name="Spriggs T."/>
            <person name="Hedblom E."/>
            <person name="Cotton M.D."/>
            <person name="Utterback T.R."/>
            <person name="Hanna M.C."/>
            <person name="Nguyen D.T."/>
            <person name="Saudek D.M."/>
            <person name="Brandon R.C."/>
            <person name="Fine L.D."/>
            <person name="Fritchman J.L."/>
            <person name="Fuhrmann J.L."/>
            <person name="Geoghagen N.S.M."/>
            <person name="Gnehm C.L."/>
            <person name="McDonald L.A."/>
            <person name="Small K.V."/>
            <person name="Fraser C.M."/>
            <person name="Smith H.O."/>
            <person name="Venter J.C."/>
        </authorList>
    </citation>
    <scope>NUCLEOTIDE SEQUENCE [LARGE SCALE GENOMIC DNA]</scope>
    <source>
        <strain>ATCC 51907 / DSM 11121 / KW20 / Rd</strain>
    </source>
</reference>
<reference key="2">
    <citation type="submission" date="1995-09" db="UniProtKB">
        <authorList>
            <person name="Koonin E.V."/>
            <person name="Rudd K.E."/>
        </authorList>
    </citation>
    <scope>IDENTIFICATION</scope>
</reference>
<reference key="3">
    <citation type="journal article" date="2002" name="Microbiology">
        <title>Novel pathways for biosynthesis of nucleotide-activated glycero-manno-heptose precursors of bacterial glycoproteins and cell surface polysaccharides.</title>
        <authorList>
            <person name="Valvano M.A."/>
            <person name="Messner P."/>
            <person name="Kosma P."/>
        </authorList>
    </citation>
    <scope>BIOSYNTHESIS OF NUCLEOTIDE-ACTIVATED GLYCERO-MANNO-HEPTOSE</scope>
</reference>
<reference key="4">
    <citation type="journal article" date="2015" name="Proc. Natl. Acad. Sci. U.S.A.">
        <title>Panoramic view of a superfamily of phosphatases through substrate profiling.</title>
        <authorList>
            <person name="Huang H."/>
            <person name="Pandya C."/>
            <person name="Liu C."/>
            <person name="Al-Obaidi N.F."/>
            <person name="Wang M."/>
            <person name="Zheng L."/>
            <person name="Toews Keating S."/>
            <person name="Aono M."/>
            <person name="Love J.D."/>
            <person name="Evans B."/>
            <person name="Seidel R.D."/>
            <person name="Hillerich B.S."/>
            <person name="Garforth S.J."/>
            <person name="Almo S.C."/>
            <person name="Mariano P.S."/>
            <person name="Dunaway-Mariano D."/>
            <person name="Allen K.N."/>
            <person name="Farelli J.D."/>
        </authorList>
    </citation>
    <scope>FUNCTION</scope>
    <scope>CATALYTIC ACTIVITY</scope>
    <scope>COFACTOR</scope>
</reference>
<keyword id="KW-0119">Carbohydrate metabolism</keyword>
<keyword id="KW-0963">Cytoplasm</keyword>
<keyword id="KW-0378">Hydrolase</keyword>
<keyword id="KW-0460">Magnesium</keyword>
<keyword id="KW-0479">Metal-binding</keyword>
<keyword id="KW-1185">Reference proteome</keyword>
<keyword id="KW-0862">Zinc</keyword>
<organism>
    <name type="scientific">Haemophilus influenzae (strain ATCC 51907 / DSM 11121 / KW20 / Rd)</name>
    <dbReference type="NCBI Taxonomy" id="71421"/>
    <lineage>
        <taxon>Bacteria</taxon>
        <taxon>Pseudomonadati</taxon>
        <taxon>Pseudomonadota</taxon>
        <taxon>Gammaproteobacteria</taxon>
        <taxon>Pasteurellales</taxon>
        <taxon>Pasteurellaceae</taxon>
        <taxon>Haemophilus</taxon>
    </lineage>
</organism>
<name>GMHBB_HAEIN</name>
<dbReference type="EC" id="3.1.3.82" evidence="3"/>
<dbReference type="EMBL" id="L42023">
    <property type="protein sequence ID" value="AAC22281.1"/>
    <property type="molecule type" value="Genomic_DNA"/>
</dbReference>
<dbReference type="RefSeq" id="NP_438781.1">
    <property type="nucleotide sequence ID" value="NC_000907.1"/>
</dbReference>
<dbReference type="SMR" id="P46452"/>
<dbReference type="STRING" id="71421.HI_0621.1"/>
<dbReference type="EnsemblBacteria" id="AAC22281">
    <property type="protein sequence ID" value="AAC22281"/>
    <property type="gene ID" value="HI_0621.1"/>
</dbReference>
<dbReference type="KEGG" id="hin:HI_0621.1"/>
<dbReference type="PATRIC" id="fig|71421.8.peg.647"/>
<dbReference type="eggNOG" id="COG0241">
    <property type="taxonomic scope" value="Bacteria"/>
</dbReference>
<dbReference type="HOGENOM" id="CLU_085077_3_0_6"/>
<dbReference type="OrthoDB" id="9781367at2"/>
<dbReference type="PhylomeDB" id="P46452"/>
<dbReference type="BioCyc" id="HINF71421:G1GJ1-644-MONOMER"/>
<dbReference type="BRENDA" id="3.1.3.82">
    <property type="organism ID" value="2529"/>
</dbReference>
<dbReference type="UniPathway" id="UPA00356">
    <property type="reaction ID" value="UER00438"/>
</dbReference>
<dbReference type="UniPathway" id="UPA00976"/>
<dbReference type="Proteomes" id="UP000000579">
    <property type="component" value="Chromosome"/>
</dbReference>
<dbReference type="GO" id="GO:0005737">
    <property type="term" value="C:cytoplasm"/>
    <property type="evidence" value="ECO:0007669"/>
    <property type="project" value="UniProtKB-SubCell"/>
</dbReference>
<dbReference type="GO" id="GO:0034200">
    <property type="term" value="F:D-glycero-beta-D-manno-heptose 1,7-bisphosphate 7-phosphatase activity"/>
    <property type="evidence" value="ECO:0000250"/>
    <property type="project" value="UniProtKB"/>
</dbReference>
<dbReference type="GO" id="GO:0000287">
    <property type="term" value="F:magnesium ion binding"/>
    <property type="evidence" value="ECO:0000250"/>
    <property type="project" value="UniProtKB"/>
</dbReference>
<dbReference type="GO" id="GO:0008270">
    <property type="term" value="F:zinc ion binding"/>
    <property type="evidence" value="ECO:0000250"/>
    <property type="project" value="UniProtKB"/>
</dbReference>
<dbReference type="GO" id="GO:0097171">
    <property type="term" value="P:ADP-L-glycero-beta-D-manno-heptose biosynthetic process"/>
    <property type="evidence" value="ECO:0007669"/>
    <property type="project" value="UniProtKB-UniPathway"/>
</dbReference>
<dbReference type="GO" id="GO:0005975">
    <property type="term" value="P:carbohydrate metabolic process"/>
    <property type="evidence" value="ECO:0007669"/>
    <property type="project" value="InterPro"/>
</dbReference>
<dbReference type="CDD" id="cd07503">
    <property type="entry name" value="HAD_HisB-N"/>
    <property type="match status" value="1"/>
</dbReference>
<dbReference type="FunFam" id="3.40.50.1000:FF:000037">
    <property type="entry name" value="D,D-heptose 1,7-bisphosphate phosphatase"/>
    <property type="match status" value="1"/>
</dbReference>
<dbReference type="Gene3D" id="3.40.50.1000">
    <property type="entry name" value="HAD superfamily/HAD-like"/>
    <property type="match status" value="1"/>
</dbReference>
<dbReference type="InterPro" id="IPR036412">
    <property type="entry name" value="HAD-like_sf"/>
</dbReference>
<dbReference type="InterPro" id="IPR006549">
    <property type="entry name" value="HAD-SF_hydro_IIIA"/>
</dbReference>
<dbReference type="InterPro" id="IPR023214">
    <property type="entry name" value="HAD_sf"/>
</dbReference>
<dbReference type="InterPro" id="IPR004446">
    <property type="entry name" value="Heptose_bisP_phosphatase"/>
</dbReference>
<dbReference type="InterPro" id="IPR006543">
    <property type="entry name" value="Histidinol-phos"/>
</dbReference>
<dbReference type="NCBIfam" id="TIGR00213">
    <property type="entry name" value="GmhB_yaeD"/>
    <property type="match status" value="1"/>
</dbReference>
<dbReference type="NCBIfam" id="TIGR01662">
    <property type="entry name" value="HAD-SF-IIIA"/>
    <property type="match status" value="1"/>
</dbReference>
<dbReference type="NCBIfam" id="TIGR01656">
    <property type="entry name" value="Histidinol-ppas"/>
    <property type="match status" value="1"/>
</dbReference>
<dbReference type="NCBIfam" id="NF006506">
    <property type="entry name" value="PRK08942.1"/>
    <property type="match status" value="1"/>
</dbReference>
<dbReference type="PANTHER" id="PTHR42891">
    <property type="entry name" value="D-GLYCERO-BETA-D-MANNO-HEPTOSE-1,7-BISPHOSPHATE 7-PHOSPHATASE"/>
    <property type="match status" value="1"/>
</dbReference>
<dbReference type="PANTHER" id="PTHR42891:SF1">
    <property type="entry name" value="D-GLYCERO-BETA-D-MANNO-HEPTOSE-1,7-BISPHOSPHATE 7-PHOSPHATASE"/>
    <property type="match status" value="1"/>
</dbReference>
<dbReference type="Pfam" id="PF00702">
    <property type="entry name" value="Hydrolase"/>
    <property type="match status" value="1"/>
</dbReference>
<dbReference type="PIRSF" id="PIRSF004682">
    <property type="entry name" value="GmhB"/>
    <property type="match status" value="1"/>
</dbReference>
<dbReference type="SUPFAM" id="SSF56784">
    <property type="entry name" value="HAD-like"/>
    <property type="match status" value="1"/>
</dbReference>
<evidence type="ECO:0000250" key="1"/>
<evidence type="ECO:0000250" key="2">
    <source>
        <dbReference type="UniProtKB" id="Q7WG29"/>
    </source>
</evidence>
<evidence type="ECO:0000269" key="3">
    <source>
    </source>
</evidence>
<evidence type="ECO:0000305" key="4"/>
<proteinExistence type="evidence at protein level"/>
<comment type="function">
    <text evidence="3">Converts the D-glycero-beta-D-manno-heptose 1,7-bisphosphate intermediate into D-glycero-beta-D-manno-heptose 1-phosphate by removing the phosphate group at the C-7 position in vitro. Also catalyzes the dephosphorylation of D-glycero-alpha-D-manno-heptose 1,7-bisphosphate, phosphoserine and fructose-1,6-biphosphate in vitro.</text>
</comment>
<comment type="catalytic activity">
    <reaction evidence="3">
        <text>D-glycero-beta-D-manno-heptose 1,7-bisphosphate + H2O = D-glycero-beta-D-manno-heptose 1-phosphate + phosphate</text>
        <dbReference type="Rhea" id="RHEA:28518"/>
        <dbReference type="ChEBI" id="CHEBI:15377"/>
        <dbReference type="ChEBI" id="CHEBI:43474"/>
        <dbReference type="ChEBI" id="CHEBI:60208"/>
        <dbReference type="ChEBI" id="CHEBI:61593"/>
        <dbReference type="EC" id="3.1.3.82"/>
    </reaction>
</comment>
<comment type="cofactor">
    <cofactor evidence="3">
        <name>Mg(2+)</name>
        <dbReference type="ChEBI" id="CHEBI:18420"/>
    </cofactor>
</comment>
<comment type="cofactor">
    <cofactor evidence="1">
        <name>Zn(2+)</name>
        <dbReference type="ChEBI" id="CHEBI:29105"/>
    </cofactor>
</comment>
<comment type="pathway">
    <text>Nucleotide-sugar biosynthesis; ADP-L-glycero-beta-D-manno-heptose biosynthesis; ADP-L-glycero-beta-D-manno-heptose from D-glycero-beta-D-manno-heptose 7-phosphate: step 2/4.</text>
</comment>
<comment type="pathway">
    <text>Bacterial outer membrane biogenesis; LOS core biosynthesis.</text>
</comment>
<comment type="subunit">
    <text evidence="1">Monomer.</text>
</comment>
<comment type="subcellular location">
    <subcellularLocation>
        <location evidence="1">Cytoplasm</location>
    </subcellularLocation>
</comment>
<comment type="similarity">
    <text evidence="4">Belongs to the GmhB family.</text>
</comment>
<sequence length="184" mass="20810">MNKAIFLDRDGTLNIDYGYVHEIDNFKFIDGVIDALRELKKMGYMLVLVTNQSGIARGYFSEDQFLQLTEWMDWSLAEQDVDLDGIYYCPHHSEGKGEYKEDCDCRKPKSGMLLQAIKELKIDPTQSIMVGDKVEDLKAGIGAKVKMNVLVRTGKPVTGEGEGIADYVLDSIVDLPRILKRLKK</sequence>
<feature type="chain" id="PRO_0000209392" description="D-glycero-beta-D-manno-heptose-1,7-bisphosphate 7-phosphatase">
    <location>
        <begin position="1"/>
        <end position="184"/>
    </location>
</feature>
<feature type="active site" description="Nucleophile" evidence="1">
    <location>
        <position position="8"/>
    </location>
</feature>
<feature type="active site" description="Proton donor" evidence="1">
    <location>
        <position position="10"/>
    </location>
</feature>
<feature type="binding site" evidence="1">
    <location>
        <begin position="8"/>
        <end position="10"/>
    </location>
    <ligand>
        <name>substrate</name>
    </ligand>
</feature>
<feature type="binding site" evidence="2">
    <location>
        <position position="8"/>
    </location>
    <ligand>
        <name>Mg(2+)</name>
        <dbReference type="ChEBI" id="CHEBI:18420"/>
    </ligand>
</feature>
<feature type="binding site" evidence="2">
    <location>
        <position position="10"/>
    </location>
    <ligand>
        <name>Mg(2+)</name>
        <dbReference type="ChEBI" id="CHEBI:18420"/>
    </ligand>
</feature>
<feature type="binding site" evidence="1">
    <location>
        <begin position="16"/>
        <end position="19"/>
    </location>
    <ligand>
        <name>substrate</name>
    </ligand>
</feature>
<feature type="binding site" evidence="1">
    <location>
        <begin position="50"/>
        <end position="53"/>
    </location>
    <ligand>
        <name>substrate</name>
    </ligand>
</feature>
<feature type="binding site" evidence="2">
    <location>
        <position position="89"/>
    </location>
    <ligand>
        <name>Zn(2+)</name>
        <dbReference type="ChEBI" id="CHEBI:29105"/>
    </ligand>
</feature>
<feature type="binding site" evidence="2">
    <location>
        <position position="91"/>
    </location>
    <ligand>
        <name>Zn(2+)</name>
        <dbReference type="ChEBI" id="CHEBI:29105"/>
    </ligand>
</feature>
<feature type="binding site" evidence="2">
    <location>
        <position position="103"/>
    </location>
    <ligand>
        <name>Zn(2+)</name>
        <dbReference type="ChEBI" id="CHEBI:29105"/>
    </ligand>
</feature>
<feature type="binding site" evidence="2">
    <location>
        <position position="105"/>
    </location>
    <ligand>
        <name>Zn(2+)</name>
        <dbReference type="ChEBI" id="CHEBI:29105"/>
    </ligand>
</feature>
<feature type="binding site" evidence="1">
    <location>
        <begin position="106"/>
        <end position="107"/>
    </location>
    <ligand>
        <name>substrate</name>
    </ligand>
</feature>
<feature type="binding site" evidence="2">
    <location>
        <position position="132"/>
    </location>
    <ligand>
        <name>Mg(2+)</name>
        <dbReference type="ChEBI" id="CHEBI:18420"/>
    </ligand>
</feature>
<feature type="binding site" evidence="1">
    <location>
        <position position="133"/>
    </location>
    <ligand>
        <name>substrate</name>
    </ligand>
</feature>
<feature type="site" description="Stabilizes the phosphoryl group" evidence="1">
    <location>
        <position position="50"/>
    </location>
</feature>
<feature type="site" description="Contributes to substrate recognition" evidence="1">
    <location>
        <position position="106"/>
    </location>
</feature>
<feature type="site" description="Stabilizes the phosphoryl group" evidence="1">
    <location>
        <position position="107"/>
    </location>
</feature>
<gene>
    <name type="primary">gmhB</name>
    <name type="ordered locus">HI_0621.1</name>
</gene>